<accession>Q65ZA5</accession>
<sequence length="87" mass="9689">MYTSASLFFIQIVISIFNSHLAVLYSIALCYSVQGRILGSSTTNFVHDSTIGVKSSWSRHLIHGINIFSFSISLFLIFLTIPLFDIG</sequence>
<proteinExistence type="predicted"/>
<name>YFSA_SCHPO</name>
<keyword id="KW-0472">Membrane</keyword>
<keyword id="KW-1185">Reference proteome</keyword>
<keyword id="KW-0812">Transmembrane</keyword>
<keyword id="KW-1133">Transmembrane helix</keyword>
<organism>
    <name type="scientific">Schizosaccharomyces pombe (strain 972 / ATCC 24843)</name>
    <name type="common">Fission yeast</name>
    <dbReference type="NCBI Taxonomy" id="284812"/>
    <lineage>
        <taxon>Eukaryota</taxon>
        <taxon>Fungi</taxon>
        <taxon>Dikarya</taxon>
        <taxon>Ascomycota</taxon>
        <taxon>Taphrinomycotina</taxon>
        <taxon>Schizosaccharomycetes</taxon>
        <taxon>Schizosaccharomycetales</taxon>
        <taxon>Schizosaccharomycetaceae</taxon>
        <taxon>Schizosaccharomyces</taxon>
    </lineage>
</organism>
<feature type="chain" id="PRO_0000116747" description="Uncharacterized protein C19D5.10c">
    <location>
        <begin position="1"/>
        <end position="87"/>
    </location>
</feature>
<feature type="transmembrane region" description="Helical" evidence="1">
    <location>
        <begin position="7"/>
        <end position="27"/>
    </location>
</feature>
<feature type="transmembrane region" description="Helical" evidence="1">
    <location>
        <begin position="64"/>
        <end position="84"/>
    </location>
</feature>
<protein>
    <recommendedName>
        <fullName>Uncharacterized protein C19D5.10c</fullName>
    </recommendedName>
</protein>
<gene>
    <name type="ORF">SPAC19D5.10c</name>
</gene>
<dbReference type="EMBL" id="CU329670">
    <property type="protein sequence ID" value="CAH25547.1"/>
    <property type="molecule type" value="Genomic_DNA"/>
</dbReference>
<dbReference type="RefSeq" id="NP_001018294.1">
    <property type="nucleotide sequence ID" value="NM_001020335.1"/>
</dbReference>
<dbReference type="PaxDb" id="4896-SPAC19D5.10c.1"/>
<dbReference type="EnsemblFungi" id="SPAC19D5.10c.1">
    <property type="protein sequence ID" value="SPAC19D5.10c.1:pep"/>
    <property type="gene ID" value="SPAC19D5.10c"/>
</dbReference>
<dbReference type="KEGG" id="spo:3361557"/>
<dbReference type="PomBase" id="SPAC19D5.10c"/>
<dbReference type="VEuPathDB" id="FungiDB:SPAC19D5.10c"/>
<dbReference type="HOGENOM" id="CLU_2484599_0_0_1"/>
<dbReference type="InParanoid" id="Q65ZA5"/>
<dbReference type="PRO" id="PR:Q65ZA5"/>
<dbReference type="Proteomes" id="UP000002485">
    <property type="component" value="Chromosome I"/>
</dbReference>
<dbReference type="GO" id="GO:0016020">
    <property type="term" value="C:membrane"/>
    <property type="evidence" value="ECO:0007669"/>
    <property type="project" value="UniProtKB-SubCell"/>
</dbReference>
<evidence type="ECO:0000255" key="1"/>
<evidence type="ECO:0000305" key="2"/>
<reference key="1">
    <citation type="journal article" date="2002" name="Nature">
        <title>The genome sequence of Schizosaccharomyces pombe.</title>
        <authorList>
            <person name="Wood V."/>
            <person name="Gwilliam R."/>
            <person name="Rajandream M.A."/>
            <person name="Lyne M.H."/>
            <person name="Lyne R."/>
            <person name="Stewart A."/>
            <person name="Sgouros J.G."/>
            <person name="Peat N."/>
            <person name="Hayles J."/>
            <person name="Baker S.G."/>
            <person name="Basham D."/>
            <person name="Bowman S."/>
            <person name="Brooks K."/>
            <person name="Brown D."/>
            <person name="Brown S."/>
            <person name="Chillingworth T."/>
            <person name="Churcher C.M."/>
            <person name="Collins M."/>
            <person name="Connor R."/>
            <person name="Cronin A."/>
            <person name="Davis P."/>
            <person name="Feltwell T."/>
            <person name="Fraser A."/>
            <person name="Gentles S."/>
            <person name="Goble A."/>
            <person name="Hamlin N."/>
            <person name="Harris D.E."/>
            <person name="Hidalgo J."/>
            <person name="Hodgson G."/>
            <person name="Holroyd S."/>
            <person name="Hornsby T."/>
            <person name="Howarth S."/>
            <person name="Huckle E.J."/>
            <person name="Hunt S."/>
            <person name="Jagels K."/>
            <person name="James K.D."/>
            <person name="Jones L."/>
            <person name="Jones M."/>
            <person name="Leather S."/>
            <person name="McDonald S."/>
            <person name="McLean J."/>
            <person name="Mooney P."/>
            <person name="Moule S."/>
            <person name="Mungall K.L."/>
            <person name="Murphy L.D."/>
            <person name="Niblett D."/>
            <person name="Odell C."/>
            <person name="Oliver K."/>
            <person name="O'Neil S."/>
            <person name="Pearson D."/>
            <person name="Quail M.A."/>
            <person name="Rabbinowitsch E."/>
            <person name="Rutherford K.M."/>
            <person name="Rutter S."/>
            <person name="Saunders D."/>
            <person name="Seeger K."/>
            <person name="Sharp S."/>
            <person name="Skelton J."/>
            <person name="Simmonds M.N."/>
            <person name="Squares R."/>
            <person name="Squares S."/>
            <person name="Stevens K."/>
            <person name="Taylor K."/>
            <person name="Taylor R.G."/>
            <person name="Tivey A."/>
            <person name="Walsh S.V."/>
            <person name="Warren T."/>
            <person name="Whitehead S."/>
            <person name="Woodward J.R."/>
            <person name="Volckaert G."/>
            <person name="Aert R."/>
            <person name="Robben J."/>
            <person name="Grymonprez B."/>
            <person name="Weltjens I."/>
            <person name="Vanstreels E."/>
            <person name="Rieger M."/>
            <person name="Schaefer M."/>
            <person name="Mueller-Auer S."/>
            <person name="Gabel C."/>
            <person name="Fuchs M."/>
            <person name="Duesterhoeft A."/>
            <person name="Fritzc C."/>
            <person name="Holzer E."/>
            <person name="Moestl D."/>
            <person name="Hilbert H."/>
            <person name="Borzym K."/>
            <person name="Langer I."/>
            <person name="Beck A."/>
            <person name="Lehrach H."/>
            <person name="Reinhardt R."/>
            <person name="Pohl T.M."/>
            <person name="Eger P."/>
            <person name="Zimmermann W."/>
            <person name="Wedler H."/>
            <person name="Wambutt R."/>
            <person name="Purnelle B."/>
            <person name="Goffeau A."/>
            <person name="Cadieu E."/>
            <person name="Dreano S."/>
            <person name="Gloux S."/>
            <person name="Lelaure V."/>
            <person name="Mottier S."/>
            <person name="Galibert F."/>
            <person name="Aves S.J."/>
            <person name="Xiang Z."/>
            <person name="Hunt C."/>
            <person name="Moore K."/>
            <person name="Hurst S.M."/>
            <person name="Lucas M."/>
            <person name="Rochet M."/>
            <person name="Gaillardin C."/>
            <person name="Tallada V.A."/>
            <person name="Garzon A."/>
            <person name="Thode G."/>
            <person name="Daga R.R."/>
            <person name="Cruzado L."/>
            <person name="Jimenez J."/>
            <person name="Sanchez M."/>
            <person name="del Rey F."/>
            <person name="Benito J."/>
            <person name="Dominguez A."/>
            <person name="Revuelta J.L."/>
            <person name="Moreno S."/>
            <person name="Armstrong J."/>
            <person name="Forsburg S.L."/>
            <person name="Cerutti L."/>
            <person name="Lowe T."/>
            <person name="McCombie W.R."/>
            <person name="Paulsen I."/>
            <person name="Potashkin J."/>
            <person name="Shpakovski G.V."/>
            <person name="Ussery D."/>
            <person name="Barrell B.G."/>
            <person name="Nurse P."/>
        </authorList>
    </citation>
    <scope>NUCLEOTIDE SEQUENCE [LARGE SCALE GENOMIC DNA]</scope>
    <source>
        <strain>972 / ATCC 24843</strain>
    </source>
</reference>
<comment type="subcellular location">
    <subcellularLocation>
        <location evidence="2">Membrane</location>
        <topology evidence="2">Multi-pass membrane protein</topology>
    </subcellularLocation>
</comment>